<feature type="chain" id="PRO_0000411147" description="Cobalt transport protein CbiM">
    <location>
        <begin position="1"/>
        <end position="225"/>
    </location>
</feature>
<feature type="transmembrane region" description="Helical" evidence="1">
    <location>
        <begin position="7"/>
        <end position="27"/>
    </location>
</feature>
<feature type="transmembrane region" description="Helical" evidence="1">
    <location>
        <begin position="43"/>
        <end position="63"/>
    </location>
</feature>
<feature type="transmembrane region" description="Helical" evidence="1">
    <location>
        <begin position="76"/>
        <end position="96"/>
    </location>
</feature>
<feature type="transmembrane region" description="Helical" evidence="1">
    <location>
        <begin position="108"/>
        <end position="128"/>
    </location>
</feature>
<feature type="transmembrane region" description="Helical" evidence="1">
    <location>
        <begin position="143"/>
        <end position="163"/>
    </location>
</feature>
<feature type="transmembrane region" description="Helical" evidence="1">
    <location>
        <begin position="175"/>
        <end position="195"/>
    </location>
</feature>
<name>CBIM_SORC5</name>
<accession>A9GQ89</accession>
<protein>
    <recommendedName>
        <fullName evidence="1">Cobalt transport protein CbiM</fullName>
    </recommendedName>
    <alternativeName>
        <fullName evidence="1">Energy-coupling factor transporter probable substrate-capture protein CbiM</fullName>
        <shortName evidence="1">ECF transporter S component CbiM</shortName>
    </alternativeName>
</protein>
<gene>
    <name evidence="1" type="primary">cbiM</name>
    <name type="ordered locus">sce0249</name>
</gene>
<comment type="function">
    <text evidence="1">Part of the energy-coupling factor (ECF) transporter complex CbiMNOQ involved in cobalt import.</text>
</comment>
<comment type="pathway">
    <text evidence="1">Cofactor biosynthesis; adenosylcobalamin biosynthesis.</text>
</comment>
<comment type="subunit">
    <text evidence="1">Forms an energy-coupling factor (ECF) transporter complex composed of an ATP-binding protein (A component, CbiO), a transmembrane protein (T component, CbiQ) and 2 possible substrate-capture proteins (S components, CbiM and CbiN) of unknown stoichimetry.</text>
</comment>
<comment type="subcellular location">
    <subcellularLocation>
        <location evidence="1">Cell inner membrane</location>
        <topology evidence="1">Multi-pass membrane protein</topology>
    </subcellularLocation>
</comment>
<comment type="similarity">
    <text evidence="1">Belongs to the CbiM family.</text>
</comment>
<comment type="sequence caution" evidence="2">
    <conflict type="erroneous initiation">
        <sequence resource="EMBL-CDS" id="CAN90406"/>
    </conflict>
    <text>Extended N-terminus.</text>
</comment>
<evidence type="ECO:0000255" key="1">
    <source>
        <dbReference type="HAMAP-Rule" id="MF_01462"/>
    </source>
</evidence>
<evidence type="ECO:0000305" key="2"/>
<keyword id="KW-0997">Cell inner membrane</keyword>
<keyword id="KW-1003">Cell membrane</keyword>
<keyword id="KW-0169">Cobalamin biosynthesis</keyword>
<keyword id="KW-0170">Cobalt</keyword>
<keyword id="KW-0171">Cobalt transport</keyword>
<keyword id="KW-0406">Ion transport</keyword>
<keyword id="KW-0472">Membrane</keyword>
<keyword id="KW-1185">Reference proteome</keyword>
<keyword id="KW-0812">Transmembrane</keyword>
<keyword id="KW-1133">Transmembrane helix</keyword>
<keyword id="KW-0813">Transport</keyword>
<organism>
    <name type="scientific">Sorangium cellulosum (strain So ce56)</name>
    <name type="common">Polyangium cellulosum (strain So ce56)</name>
    <dbReference type="NCBI Taxonomy" id="448385"/>
    <lineage>
        <taxon>Bacteria</taxon>
        <taxon>Pseudomonadati</taxon>
        <taxon>Myxococcota</taxon>
        <taxon>Polyangia</taxon>
        <taxon>Polyangiales</taxon>
        <taxon>Polyangiaceae</taxon>
        <taxon>Sorangium</taxon>
    </lineage>
</organism>
<sequence length="225" mass="23305">MHLAEGVLPLGWCAFWNALALPFVAIALHLLRRRTEQDAFYKPFVGLIAAAVFAISCMPVPVPTAGTCSHPCGTGLAAVLIGPWMTVLVTVVALLIQALFLAHGGLTTLGADVASMGIAGAFTGYFAFHLARRSGANLWVAGFLAGVTSDWATYATTALALALGLSGEGSVTSMFTGVALAFVPTQLPLGLLEGVMTAGALAFLRARRPDILDRLQVVRLAPGAS</sequence>
<reference key="1">
    <citation type="journal article" date="2007" name="Nat. Biotechnol.">
        <title>Complete genome sequence of the myxobacterium Sorangium cellulosum.</title>
        <authorList>
            <person name="Schneiker S."/>
            <person name="Perlova O."/>
            <person name="Kaiser O."/>
            <person name="Gerth K."/>
            <person name="Alici A."/>
            <person name="Altmeyer M.O."/>
            <person name="Bartels D."/>
            <person name="Bekel T."/>
            <person name="Beyer S."/>
            <person name="Bode E."/>
            <person name="Bode H.B."/>
            <person name="Bolten C.J."/>
            <person name="Choudhuri J.V."/>
            <person name="Doss S."/>
            <person name="Elnakady Y.A."/>
            <person name="Frank B."/>
            <person name="Gaigalat L."/>
            <person name="Goesmann A."/>
            <person name="Groeger C."/>
            <person name="Gross F."/>
            <person name="Jelsbak L."/>
            <person name="Jelsbak L."/>
            <person name="Kalinowski J."/>
            <person name="Kegler C."/>
            <person name="Knauber T."/>
            <person name="Konietzny S."/>
            <person name="Kopp M."/>
            <person name="Krause L."/>
            <person name="Krug D."/>
            <person name="Linke B."/>
            <person name="Mahmud T."/>
            <person name="Martinez-Arias R."/>
            <person name="McHardy A.C."/>
            <person name="Merai M."/>
            <person name="Meyer F."/>
            <person name="Mormann S."/>
            <person name="Munoz-Dorado J."/>
            <person name="Perez J."/>
            <person name="Pradella S."/>
            <person name="Rachid S."/>
            <person name="Raddatz G."/>
            <person name="Rosenau F."/>
            <person name="Rueckert C."/>
            <person name="Sasse F."/>
            <person name="Scharfe M."/>
            <person name="Schuster S.C."/>
            <person name="Suen G."/>
            <person name="Treuner-Lange A."/>
            <person name="Velicer G.J."/>
            <person name="Vorholter F.-J."/>
            <person name="Weissman K.J."/>
            <person name="Welch R.D."/>
            <person name="Wenzel S.C."/>
            <person name="Whitworth D.E."/>
            <person name="Wilhelm S."/>
            <person name="Wittmann C."/>
            <person name="Bloecker H."/>
            <person name="Puehler A."/>
            <person name="Mueller R."/>
        </authorList>
    </citation>
    <scope>NUCLEOTIDE SEQUENCE [LARGE SCALE GENOMIC DNA]</scope>
    <source>
        <strain>So ce56</strain>
    </source>
</reference>
<dbReference type="EMBL" id="AM746676">
    <property type="protein sequence ID" value="CAN90406.1"/>
    <property type="status" value="ALT_INIT"/>
    <property type="molecule type" value="Genomic_DNA"/>
</dbReference>
<dbReference type="RefSeq" id="WP_012232884.1">
    <property type="nucleotide sequence ID" value="NC_010162.1"/>
</dbReference>
<dbReference type="SMR" id="A9GQ89"/>
<dbReference type="STRING" id="448385.sce0249"/>
<dbReference type="KEGG" id="scl:sce0249"/>
<dbReference type="eggNOG" id="COG0310">
    <property type="taxonomic scope" value="Bacteria"/>
</dbReference>
<dbReference type="HOGENOM" id="CLU_052508_3_0_7"/>
<dbReference type="OrthoDB" id="9809846at2"/>
<dbReference type="UniPathway" id="UPA00148"/>
<dbReference type="Proteomes" id="UP000002139">
    <property type="component" value="Chromosome"/>
</dbReference>
<dbReference type="GO" id="GO:0043190">
    <property type="term" value="C:ATP-binding cassette (ABC) transporter complex"/>
    <property type="evidence" value="ECO:0007669"/>
    <property type="project" value="InterPro"/>
</dbReference>
<dbReference type="GO" id="GO:0015087">
    <property type="term" value="F:cobalt ion transmembrane transporter activity"/>
    <property type="evidence" value="ECO:0007669"/>
    <property type="project" value="UniProtKB-UniRule"/>
</dbReference>
<dbReference type="GO" id="GO:0009236">
    <property type="term" value="P:cobalamin biosynthetic process"/>
    <property type="evidence" value="ECO:0007669"/>
    <property type="project" value="UniProtKB-UniRule"/>
</dbReference>
<dbReference type="Gene3D" id="1.10.1760.20">
    <property type="match status" value="1"/>
</dbReference>
<dbReference type="HAMAP" id="MF_01462">
    <property type="entry name" value="CbiM"/>
    <property type="match status" value="1"/>
</dbReference>
<dbReference type="InterPro" id="IPR018024">
    <property type="entry name" value="CbiM"/>
</dbReference>
<dbReference type="InterPro" id="IPR002751">
    <property type="entry name" value="CbiM/NikMN"/>
</dbReference>
<dbReference type="NCBIfam" id="NF006184">
    <property type="entry name" value="PRK08319.1"/>
    <property type="match status" value="1"/>
</dbReference>
<dbReference type="PANTHER" id="PTHR43627">
    <property type="match status" value="1"/>
</dbReference>
<dbReference type="PANTHER" id="PTHR43627:SF1">
    <property type="entry name" value="COBALT TRANSPORT PROTEIN CBIM"/>
    <property type="match status" value="1"/>
</dbReference>
<dbReference type="Pfam" id="PF01891">
    <property type="entry name" value="CbiM"/>
    <property type="match status" value="1"/>
</dbReference>
<proteinExistence type="inferred from homology"/>